<sequence length="86" mass="10062">MSALDKTMYFDFGQNEKKDVHQTLETVYNSLEEKGYNPINQIVGYLLSGDPAYIPRLNDARNLIRKHERDEIIEELVRAYLDKGEK</sequence>
<proteinExistence type="inferred from homology"/>
<protein>
    <recommendedName>
        <fullName evidence="1">UPF0297 protein LSL_1110</fullName>
    </recommendedName>
</protein>
<feature type="chain" id="PRO_0000245634" description="UPF0297 protein LSL_1110">
    <location>
        <begin position="1"/>
        <end position="86"/>
    </location>
</feature>
<organism>
    <name type="scientific">Ligilactobacillus salivarius (strain UCC118)</name>
    <name type="common">Lactobacillus salivarius</name>
    <dbReference type="NCBI Taxonomy" id="362948"/>
    <lineage>
        <taxon>Bacteria</taxon>
        <taxon>Bacillati</taxon>
        <taxon>Bacillota</taxon>
        <taxon>Bacilli</taxon>
        <taxon>Lactobacillales</taxon>
        <taxon>Lactobacillaceae</taxon>
        <taxon>Ligilactobacillus</taxon>
    </lineage>
</organism>
<name>Y1110_LIGS1</name>
<gene>
    <name type="ordered locus">LSL_1110</name>
</gene>
<keyword id="KW-1185">Reference proteome</keyword>
<evidence type="ECO:0000255" key="1">
    <source>
        <dbReference type="HAMAP-Rule" id="MF_01507"/>
    </source>
</evidence>
<comment type="similarity">
    <text evidence="1">Belongs to the UPF0297 family.</text>
</comment>
<accession>Q1WT33</accession>
<reference key="1">
    <citation type="journal article" date="2006" name="Proc. Natl. Acad. Sci. U.S.A.">
        <title>Multireplicon genome architecture of Lactobacillus salivarius.</title>
        <authorList>
            <person name="Claesson M.J."/>
            <person name="Li Y."/>
            <person name="Leahy S."/>
            <person name="Canchaya C."/>
            <person name="van Pijkeren J.P."/>
            <person name="Cerdeno-Tarraga A.M."/>
            <person name="Parkhill J."/>
            <person name="Flynn S."/>
            <person name="O'Sullivan G.C."/>
            <person name="Collins J.K."/>
            <person name="Higgins D."/>
            <person name="Shanahan F."/>
            <person name="Fitzgerald G.F."/>
            <person name="van Sinderen D."/>
            <person name="O'Toole P.W."/>
        </authorList>
    </citation>
    <scope>NUCLEOTIDE SEQUENCE [LARGE SCALE GENOMIC DNA]</scope>
    <source>
        <strain>UCC118</strain>
    </source>
</reference>
<dbReference type="EMBL" id="CP000233">
    <property type="protein sequence ID" value="ABD99918.1"/>
    <property type="molecule type" value="Genomic_DNA"/>
</dbReference>
<dbReference type="RefSeq" id="WP_003703962.1">
    <property type="nucleotide sequence ID" value="NC_007929.1"/>
</dbReference>
<dbReference type="RefSeq" id="YP_536001.1">
    <property type="nucleotide sequence ID" value="NC_007929.1"/>
</dbReference>
<dbReference type="SMR" id="Q1WT33"/>
<dbReference type="STRING" id="362948.LSL_1110"/>
<dbReference type="KEGG" id="lsl:LSL_1110"/>
<dbReference type="PATRIC" id="fig|362948.14.peg.1182"/>
<dbReference type="HOGENOM" id="CLU_162466_0_0_9"/>
<dbReference type="OrthoDB" id="9796303at2"/>
<dbReference type="Proteomes" id="UP000006559">
    <property type="component" value="Chromosome"/>
</dbReference>
<dbReference type="HAMAP" id="MF_01507">
    <property type="entry name" value="UPF0297"/>
    <property type="match status" value="1"/>
</dbReference>
<dbReference type="InterPro" id="IPR009309">
    <property type="entry name" value="IreB"/>
</dbReference>
<dbReference type="NCBIfam" id="NF003997">
    <property type="entry name" value="PRK05473.1"/>
    <property type="match status" value="1"/>
</dbReference>
<dbReference type="PANTHER" id="PTHR40067">
    <property type="entry name" value="UPF0297 PROTEIN YRZL"/>
    <property type="match status" value="1"/>
</dbReference>
<dbReference type="PANTHER" id="PTHR40067:SF1">
    <property type="entry name" value="UPF0297 PROTEIN YRZL"/>
    <property type="match status" value="1"/>
</dbReference>
<dbReference type="Pfam" id="PF06135">
    <property type="entry name" value="IreB"/>
    <property type="match status" value="1"/>
</dbReference>
<dbReference type="PIRSF" id="PIRSF037258">
    <property type="entry name" value="DUF965_bac"/>
    <property type="match status" value="1"/>
</dbReference>